<reference key="1">
    <citation type="journal article" date="2009" name="Genome Biol.">
        <title>Genomic and genetic analyses of diversity and plant interactions of Pseudomonas fluorescens.</title>
        <authorList>
            <person name="Silby M.W."/>
            <person name="Cerdeno-Tarraga A.M."/>
            <person name="Vernikos G.S."/>
            <person name="Giddens S.R."/>
            <person name="Jackson R.W."/>
            <person name="Preston G.M."/>
            <person name="Zhang X.-X."/>
            <person name="Moon C.D."/>
            <person name="Gehrig S.M."/>
            <person name="Godfrey S.A.C."/>
            <person name="Knight C.G."/>
            <person name="Malone J.G."/>
            <person name="Robinson Z."/>
            <person name="Spiers A.J."/>
            <person name="Harris S."/>
            <person name="Challis G.L."/>
            <person name="Yaxley A.M."/>
            <person name="Harris D."/>
            <person name="Seeger K."/>
            <person name="Murphy L."/>
            <person name="Rutter S."/>
            <person name="Squares R."/>
            <person name="Quail M.A."/>
            <person name="Saunders E."/>
            <person name="Mavromatis K."/>
            <person name="Brettin T.S."/>
            <person name="Bentley S.D."/>
            <person name="Hothersall J."/>
            <person name="Stephens E."/>
            <person name="Thomas C.M."/>
            <person name="Parkhill J."/>
            <person name="Levy S.B."/>
            <person name="Rainey P.B."/>
            <person name="Thomson N.R."/>
        </authorList>
    </citation>
    <scope>NUCLEOTIDE SEQUENCE [LARGE SCALE GENOMIC DNA]</scope>
    <source>
        <strain>Pf0-1</strain>
    </source>
</reference>
<gene>
    <name evidence="1" type="primary">xerC</name>
    <name type="ordered locus">Pfl01_5501</name>
</gene>
<proteinExistence type="inferred from homology"/>
<accession>Q3K4R6</accession>
<organism>
    <name type="scientific">Pseudomonas fluorescens (strain Pf0-1)</name>
    <dbReference type="NCBI Taxonomy" id="205922"/>
    <lineage>
        <taxon>Bacteria</taxon>
        <taxon>Pseudomonadati</taxon>
        <taxon>Pseudomonadota</taxon>
        <taxon>Gammaproteobacteria</taxon>
        <taxon>Pseudomonadales</taxon>
        <taxon>Pseudomonadaceae</taxon>
        <taxon>Pseudomonas</taxon>
    </lineage>
</organism>
<dbReference type="EMBL" id="CP000094">
    <property type="protein sequence ID" value="ABA77238.1"/>
    <property type="molecule type" value="Genomic_DNA"/>
</dbReference>
<dbReference type="RefSeq" id="WP_011336524.1">
    <property type="nucleotide sequence ID" value="NC_007492.2"/>
</dbReference>
<dbReference type="SMR" id="Q3K4R6"/>
<dbReference type="KEGG" id="pfo:Pfl01_5501"/>
<dbReference type="eggNOG" id="COG4973">
    <property type="taxonomic scope" value="Bacteria"/>
</dbReference>
<dbReference type="HOGENOM" id="CLU_027562_9_0_6"/>
<dbReference type="Proteomes" id="UP000002704">
    <property type="component" value="Chromosome"/>
</dbReference>
<dbReference type="GO" id="GO:0005737">
    <property type="term" value="C:cytoplasm"/>
    <property type="evidence" value="ECO:0007669"/>
    <property type="project" value="UniProtKB-SubCell"/>
</dbReference>
<dbReference type="GO" id="GO:0003677">
    <property type="term" value="F:DNA binding"/>
    <property type="evidence" value="ECO:0007669"/>
    <property type="project" value="UniProtKB-KW"/>
</dbReference>
<dbReference type="GO" id="GO:0009037">
    <property type="term" value="F:tyrosine-based site-specific recombinase activity"/>
    <property type="evidence" value="ECO:0007669"/>
    <property type="project" value="UniProtKB-UniRule"/>
</dbReference>
<dbReference type="GO" id="GO:0051301">
    <property type="term" value="P:cell division"/>
    <property type="evidence" value="ECO:0007669"/>
    <property type="project" value="UniProtKB-KW"/>
</dbReference>
<dbReference type="GO" id="GO:0007059">
    <property type="term" value="P:chromosome segregation"/>
    <property type="evidence" value="ECO:0007669"/>
    <property type="project" value="UniProtKB-UniRule"/>
</dbReference>
<dbReference type="GO" id="GO:0006313">
    <property type="term" value="P:DNA transposition"/>
    <property type="evidence" value="ECO:0007669"/>
    <property type="project" value="UniProtKB-UniRule"/>
</dbReference>
<dbReference type="CDD" id="cd00798">
    <property type="entry name" value="INT_XerDC_C"/>
    <property type="match status" value="1"/>
</dbReference>
<dbReference type="Gene3D" id="1.10.150.130">
    <property type="match status" value="1"/>
</dbReference>
<dbReference type="Gene3D" id="1.10.443.10">
    <property type="entry name" value="Intergrase catalytic core"/>
    <property type="match status" value="1"/>
</dbReference>
<dbReference type="HAMAP" id="MF_01808">
    <property type="entry name" value="Recomb_XerC_XerD"/>
    <property type="match status" value="1"/>
</dbReference>
<dbReference type="InterPro" id="IPR044068">
    <property type="entry name" value="CB"/>
</dbReference>
<dbReference type="InterPro" id="IPR011010">
    <property type="entry name" value="DNA_brk_join_enz"/>
</dbReference>
<dbReference type="InterPro" id="IPR013762">
    <property type="entry name" value="Integrase-like_cat_sf"/>
</dbReference>
<dbReference type="InterPro" id="IPR002104">
    <property type="entry name" value="Integrase_catalytic"/>
</dbReference>
<dbReference type="InterPro" id="IPR010998">
    <property type="entry name" value="Integrase_recombinase_N"/>
</dbReference>
<dbReference type="InterPro" id="IPR004107">
    <property type="entry name" value="Integrase_SAM-like_N"/>
</dbReference>
<dbReference type="InterPro" id="IPR011931">
    <property type="entry name" value="Recomb_XerC"/>
</dbReference>
<dbReference type="InterPro" id="IPR023009">
    <property type="entry name" value="Tyrosine_recombinase_XerC/XerD"/>
</dbReference>
<dbReference type="InterPro" id="IPR050090">
    <property type="entry name" value="Tyrosine_recombinase_XerCD"/>
</dbReference>
<dbReference type="NCBIfam" id="NF001399">
    <property type="entry name" value="PRK00283.1"/>
    <property type="match status" value="1"/>
</dbReference>
<dbReference type="NCBIfam" id="TIGR02224">
    <property type="entry name" value="recomb_XerC"/>
    <property type="match status" value="1"/>
</dbReference>
<dbReference type="PANTHER" id="PTHR30349">
    <property type="entry name" value="PHAGE INTEGRASE-RELATED"/>
    <property type="match status" value="1"/>
</dbReference>
<dbReference type="PANTHER" id="PTHR30349:SF81">
    <property type="entry name" value="TYROSINE RECOMBINASE XERC"/>
    <property type="match status" value="1"/>
</dbReference>
<dbReference type="Pfam" id="PF02899">
    <property type="entry name" value="Phage_int_SAM_1"/>
    <property type="match status" value="1"/>
</dbReference>
<dbReference type="Pfam" id="PF00589">
    <property type="entry name" value="Phage_integrase"/>
    <property type="match status" value="1"/>
</dbReference>
<dbReference type="SUPFAM" id="SSF56349">
    <property type="entry name" value="DNA breaking-rejoining enzymes"/>
    <property type="match status" value="1"/>
</dbReference>
<dbReference type="SUPFAM" id="SSF47823">
    <property type="entry name" value="lambda integrase-like, N-terminal domain"/>
    <property type="match status" value="1"/>
</dbReference>
<dbReference type="PROSITE" id="PS51900">
    <property type="entry name" value="CB"/>
    <property type="match status" value="1"/>
</dbReference>
<dbReference type="PROSITE" id="PS51898">
    <property type="entry name" value="TYR_RECOMBINASE"/>
    <property type="match status" value="1"/>
</dbReference>
<evidence type="ECO:0000255" key="1">
    <source>
        <dbReference type="HAMAP-Rule" id="MF_01808"/>
    </source>
</evidence>
<evidence type="ECO:0000255" key="2">
    <source>
        <dbReference type="PROSITE-ProRule" id="PRU01246"/>
    </source>
</evidence>
<evidence type="ECO:0000255" key="3">
    <source>
        <dbReference type="PROSITE-ProRule" id="PRU01248"/>
    </source>
</evidence>
<feature type="chain" id="PRO_1000070029" description="Tyrosine recombinase XerC">
    <location>
        <begin position="1"/>
        <end position="299"/>
    </location>
</feature>
<feature type="domain" description="Core-binding (CB)" evidence="3">
    <location>
        <begin position="1"/>
        <end position="85"/>
    </location>
</feature>
<feature type="domain" description="Tyr recombinase" evidence="2">
    <location>
        <begin position="106"/>
        <end position="285"/>
    </location>
</feature>
<feature type="active site" evidence="1">
    <location>
        <position position="146"/>
    </location>
</feature>
<feature type="active site" evidence="1">
    <location>
        <position position="170"/>
    </location>
</feature>
<feature type="active site" evidence="1">
    <location>
        <position position="237"/>
    </location>
</feature>
<feature type="active site" evidence="1">
    <location>
        <position position="240"/>
    </location>
</feature>
<feature type="active site" evidence="1">
    <location>
        <position position="263"/>
    </location>
</feature>
<feature type="active site" description="O-(3'-phospho-DNA)-tyrosine intermediate" evidence="1">
    <location>
        <position position="272"/>
    </location>
</feature>
<comment type="function">
    <text evidence="1">Site-specific tyrosine recombinase, which acts by catalyzing the cutting and rejoining of the recombining DNA molecules. The XerC-XerD complex is essential to convert dimers of the bacterial chromosome into monomers to permit their segregation at cell division. It also contributes to the segregational stability of plasmids.</text>
</comment>
<comment type="subunit">
    <text evidence="1">Forms a cyclic heterotetrameric complex composed of two molecules of XerC and two molecules of XerD.</text>
</comment>
<comment type="subcellular location">
    <subcellularLocation>
        <location evidence="1">Cytoplasm</location>
    </subcellularLocation>
</comment>
<comment type="similarity">
    <text evidence="1">Belongs to the 'phage' integrase family. XerC subfamily.</text>
</comment>
<name>XERC_PSEPF</name>
<sequence>MERQLDAYCEHLRSERQVSPHTLSAYRRDLDKVLGWCIKQNIGSWQALDIQRLRSLIARLHAQGQSSRSLARLLSAVRGLYHYLNRECLCDHDPATGLAPPKGERRLPKTLDTDRALQLLEGAVEDDFLARRDQAILELFYSSGLRLSELTGLNLDQLDLADGMVQVLGKGSKTRLLPVGKKAREALEQWLPLRALTNPSDDAVFVSQQGRRLGPRAIQVRVKLAGERELGQNLHPHMLRHSFASHLLESSQDLRAVQELLGHSDIKTTQIYTHLDFQHLAAVYDSAHPRAKRMKGDDS</sequence>
<keyword id="KW-0131">Cell cycle</keyword>
<keyword id="KW-0132">Cell division</keyword>
<keyword id="KW-0159">Chromosome partition</keyword>
<keyword id="KW-0963">Cytoplasm</keyword>
<keyword id="KW-0229">DNA integration</keyword>
<keyword id="KW-0233">DNA recombination</keyword>
<keyword id="KW-0238">DNA-binding</keyword>
<protein>
    <recommendedName>
        <fullName evidence="1">Tyrosine recombinase XerC</fullName>
    </recommendedName>
</protein>